<accession>A5WFF6</accession>
<feature type="chain" id="PRO_0000322833" description="Holliday junction branch migration complex subunit RuvB">
    <location>
        <begin position="1"/>
        <end position="325"/>
    </location>
</feature>
<feature type="region of interest" description="Large ATPase domain (RuvB-L)" evidence="1">
    <location>
        <begin position="1"/>
        <end position="181"/>
    </location>
</feature>
<feature type="region of interest" description="Small ATPAse domain (RuvB-S)" evidence="1">
    <location>
        <begin position="182"/>
        <end position="252"/>
    </location>
</feature>
<feature type="region of interest" description="Head domain (RuvB-H)" evidence="1">
    <location>
        <begin position="255"/>
        <end position="325"/>
    </location>
</feature>
<feature type="binding site" evidence="1">
    <location>
        <position position="20"/>
    </location>
    <ligand>
        <name>ATP</name>
        <dbReference type="ChEBI" id="CHEBI:30616"/>
    </ligand>
</feature>
<feature type="binding site" evidence="1">
    <location>
        <position position="21"/>
    </location>
    <ligand>
        <name>ATP</name>
        <dbReference type="ChEBI" id="CHEBI:30616"/>
    </ligand>
</feature>
<feature type="binding site" evidence="1">
    <location>
        <position position="62"/>
    </location>
    <ligand>
        <name>ATP</name>
        <dbReference type="ChEBI" id="CHEBI:30616"/>
    </ligand>
</feature>
<feature type="binding site" evidence="1">
    <location>
        <position position="65"/>
    </location>
    <ligand>
        <name>ATP</name>
        <dbReference type="ChEBI" id="CHEBI:30616"/>
    </ligand>
</feature>
<feature type="binding site" evidence="1">
    <location>
        <position position="66"/>
    </location>
    <ligand>
        <name>ATP</name>
        <dbReference type="ChEBI" id="CHEBI:30616"/>
    </ligand>
</feature>
<feature type="binding site" evidence="1">
    <location>
        <position position="66"/>
    </location>
    <ligand>
        <name>Mg(2+)</name>
        <dbReference type="ChEBI" id="CHEBI:18420"/>
    </ligand>
</feature>
<feature type="binding site" evidence="1">
    <location>
        <position position="67"/>
    </location>
    <ligand>
        <name>ATP</name>
        <dbReference type="ChEBI" id="CHEBI:30616"/>
    </ligand>
</feature>
<feature type="binding site" evidence="1">
    <location>
        <begin position="128"/>
        <end position="130"/>
    </location>
    <ligand>
        <name>ATP</name>
        <dbReference type="ChEBI" id="CHEBI:30616"/>
    </ligand>
</feature>
<feature type="binding site" evidence="1">
    <location>
        <position position="171"/>
    </location>
    <ligand>
        <name>ATP</name>
        <dbReference type="ChEBI" id="CHEBI:30616"/>
    </ligand>
</feature>
<feature type="binding site" evidence="1">
    <location>
        <position position="181"/>
    </location>
    <ligand>
        <name>ATP</name>
        <dbReference type="ChEBI" id="CHEBI:30616"/>
    </ligand>
</feature>
<feature type="binding site" evidence="1">
    <location>
        <position position="218"/>
    </location>
    <ligand>
        <name>ATP</name>
        <dbReference type="ChEBI" id="CHEBI:30616"/>
    </ligand>
</feature>
<feature type="binding site" evidence="1">
    <location>
        <position position="291"/>
    </location>
    <ligand>
        <name>DNA</name>
        <dbReference type="ChEBI" id="CHEBI:16991"/>
    </ligand>
</feature>
<feature type="binding site" evidence="1">
    <location>
        <position position="310"/>
    </location>
    <ligand>
        <name>DNA</name>
        <dbReference type="ChEBI" id="CHEBI:16991"/>
    </ligand>
</feature>
<feature type="binding site" evidence="1">
    <location>
        <position position="315"/>
    </location>
    <ligand>
        <name>DNA</name>
        <dbReference type="ChEBI" id="CHEBI:16991"/>
    </ligand>
</feature>
<dbReference type="EC" id="3.6.4.-" evidence="1"/>
<dbReference type="EMBL" id="CP000713">
    <property type="protein sequence ID" value="ABQ94397.1"/>
    <property type="molecule type" value="Genomic_DNA"/>
</dbReference>
<dbReference type="SMR" id="A5WFF6"/>
<dbReference type="STRING" id="349106.PsycPRwf_1452"/>
<dbReference type="KEGG" id="prw:PsycPRwf_1452"/>
<dbReference type="eggNOG" id="COG2255">
    <property type="taxonomic scope" value="Bacteria"/>
</dbReference>
<dbReference type="HOGENOM" id="CLU_055599_1_0_6"/>
<dbReference type="GO" id="GO:0005737">
    <property type="term" value="C:cytoplasm"/>
    <property type="evidence" value="ECO:0007669"/>
    <property type="project" value="UniProtKB-SubCell"/>
</dbReference>
<dbReference type="GO" id="GO:0048476">
    <property type="term" value="C:Holliday junction resolvase complex"/>
    <property type="evidence" value="ECO:0007669"/>
    <property type="project" value="UniProtKB-UniRule"/>
</dbReference>
<dbReference type="GO" id="GO:0005524">
    <property type="term" value="F:ATP binding"/>
    <property type="evidence" value="ECO:0007669"/>
    <property type="project" value="UniProtKB-UniRule"/>
</dbReference>
<dbReference type="GO" id="GO:0016887">
    <property type="term" value="F:ATP hydrolysis activity"/>
    <property type="evidence" value="ECO:0007669"/>
    <property type="project" value="InterPro"/>
</dbReference>
<dbReference type="GO" id="GO:0000400">
    <property type="term" value="F:four-way junction DNA binding"/>
    <property type="evidence" value="ECO:0007669"/>
    <property type="project" value="UniProtKB-UniRule"/>
</dbReference>
<dbReference type="GO" id="GO:0009378">
    <property type="term" value="F:four-way junction helicase activity"/>
    <property type="evidence" value="ECO:0007669"/>
    <property type="project" value="InterPro"/>
</dbReference>
<dbReference type="GO" id="GO:0006310">
    <property type="term" value="P:DNA recombination"/>
    <property type="evidence" value="ECO:0007669"/>
    <property type="project" value="UniProtKB-UniRule"/>
</dbReference>
<dbReference type="GO" id="GO:0006281">
    <property type="term" value="P:DNA repair"/>
    <property type="evidence" value="ECO:0007669"/>
    <property type="project" value="UniProtKB-UniRule"/>
</dbReference>
<dbReference type="CDD" id="cd00009">
    <property type="entry name" value="AAA"/>
    <property type="match status" value="1"/>
</dbReference>
<dbReference type="FunFam" id="1.10.8.60:FF:000023">
    <property type="entry name" value="Holliday junction ATP-dependent DNA helicase RuvB"/>
    <property type="match status" value="1"/>
</dbReference>
<dbReference type="FunFam" id="3.40.50.300:FF:000073">
    <property type="entry name" value="Holliday junction ATP-dependent DNA helicase RuvB"/>
    <property type="match status" value="1"/>
</dbReference>
<dbReference type="Gene3D" id="1.10.8.60">
    <property type="match status" value="1"/>
</dbReference>
<dbReference type="Gene3D" id="3.40.50.300">
    <property type="entry name" value="P-loop containing nucleotide triphosphate hydrolases"/>
    <property type="match status" value="1"/>
</dbReference>
<dbReference type="Gene3D" id="1.10.10.10">
    <property type="entry name" value="Winged helix-like DNA-binding domain superfamily/Winged helix DNA-binding domain"/>
    <property type="match status" value="1"/>
</dbReference>
<dbReference type="HAMAP" id="MF_00016">
    <property type="entry name" value="DNA_HJ_migration_RuvB"/>
    <property type="match status" value="1"/>
</dbReference>
<dbReference type="InterPro" id="IPR003593">
    <property type="entry name" value="AAA+_ATPase"/>
</dbReference>
<dbReference type="InterPro" id="IPR041445">
    <property type="entry name" value="AAA_lid_4"/>
</dbReference>
<dbReference type="InterPro" id="IPR004605">
    <property type="entry name" value="DNA_helicase_Holl-junc_RuvB"/>
</dbReference>
<dbReference type="InterPro" id="IPR027417">
    <property type="entry name" value="P-loop_NTPase"/>
</dbReference>
<dbReference type="InterPro" id="IPR008824">
    <property type="entry name" value="RuvB-like_N"/>
</dbReference>
<dbReference type="InterPro" id="IPR008823">
    <property type="entry name" value="RuvB_C"/>
</dbReference>
<dbReference type="InterPro" id="IPR036388">
    <property type="entry name" value="WH-like_DNA-bd_sf"/>
</dbReference>
<dbReference type="InterPro" id="IPR036390">
    <property type="entry name" value="WH_DNA-bd_sf"/>
</dbReference>
<dbReference type="NCBIfam" id="NF000868">
    <property type="entry name" value="PRK00080.1"/>
    <property type="match status" value="1"/>
</dbReference>
<dbReference type="NCBIfam" id="TIGR00635">
    <property type="entry name" value="ruvB"/>
    <property type="match status" value="1"/>
</dbReference>
<dbReference type="PANTHER" id="PTHR42848">
    <property type="match status" value="1"/>
</dbReference>
<dbReference type="PANTHER" id="PTHR42848:SF1">
    <property type="entry name" value="HOLLIDAY JUNCTION BRANCH MIGRATION COMPLEX SUBUNIT RUVB"/>
    <property type="match status" value="1"/>
</dbReference>
<dbReference type="Pfam" id="PF17864">
    <property type="entry name" value="AAA_lid_4"/>
    <property type="match status" value="1"/>
</dbReference>
<dbReference type="Pfam" id="PF05491">
    <property type="entry name" value="RuvB_C"/>
    <property type="match status" value="1"/>
</dbReference>
<dbReference type="Pfam" id="PF05496">
    <property type="entry name" value="RuvB_N"/>
    <property type="match status" value="1"/>
</dbReference>
<dbReference type="SMART" id="SM00382">
    <property type="entry name" value="AAA"/>
    <property type="match status" value="1"/>
</dbReference>
<dbReference type="SUPFAM" id="SSF52540">
    <property type="entry name" value="P-loop containing nucleoside triphosphate hydrolases"/>
    <property type="match status" value="1"/>
</dbReference>
<dbReference type="SUPFAM" id="SSF46785">
    <property type="entry name" value="Winged helix' DNA-binding domain"/>
    <property type="match status" value="1"/>
</dbReference>
<keyword id="KW-0067">ATP-binding</keyword>
<keyword id="KW-0963">Cytoplasm</keyword>
<keyword id="KW-0227">DNA damage</keyword>
<keyword id="KW-0233">DNA recombination</keyword>
<keyword id="KW-0234">DNA repair</keyword>
<keyword id="KW-0238">DNA-binding</keyword>
<keyword id="KW-0378">Hydrolase</keyword>
<keyword id="KW-0547">Nucleotide-binding</keyword>
<name>RUVB_PSYWF</name>
<protein>
    <recommendedName>
        <fullName evidence="1">Holliday junction branch migration complex subunit RuvB</fullName>
        <ecNumber evidence="1">3.6.4.-</ecNumber>
    </recommendedName>
</protein>
<comment type="function">
    <text evidence="1">The RuvA-RuvB-RuvC complex processes Holliday junction (HJ) DNA during genetic recombination and DNA repair, while the RuvA-RuvB complex plays an important role in the rescue of blocked DNA replication forks via replication fork reversal (RFR). RuvA specifically binds to HJ cruciform DNA, conferring on it an open structure. The RuvB hexamer acts as an ATP-dependent pump, pulling dsDNA into and through the RuvAB complex. RuvB forms 2 homohexamers on either side of HJ DNA bound by 1 or 2 RuvA tetramers; 4 subunits per hexamer contact DNA at a time. Coordinated motions by a converter formed by DNA-disengaged RuvB subunits stimulates ATP hydrolysis and nucleotide exchange. Immobilization of the converter enables RuvB to convert the ATP-contained energy into a lever motion, pulling 2 nucleotides of DNA out of the RuvA tetramer per ATP hydrolyzed, thus driving DNA branch migration. The RuvB motors rotate together with the DNA substrate, which together with the progressing nucleotide cycle form the mechanistic basis for DNA recombination by continuous HJ branch migration. Branch migration allows RuvC to scan DNA until it finds its consensus sequence, where it cleaves and resolves cruciform DNA.</text>
</comment>
<comment type="catalytic activity">
    <reaction evidence="1">
        <text>ATP + H2O = ADP + phosphate + H(+)</text>
        <dbReference type="Rhea" id="RHEA:13065"/>
        <dbReference type="ChEBI" id="CHEBI:15377"/>
        <dbReference type="ChEBI" id="CHEBI:15378"/>
        <dbReference type="ChEBI" id="CHEBI:30616"/>
        <dbReference type="ChEBI" id="CHEBI:43474"/>
        <dbReference type="ChEBI" id="CHEBI:456216"/>
    </reaction>
</comment>
<comment type="subunit">
    <text evidence="1">Homohexamer. Forms an RuvA(8)-RuvB(12)-Holliday junction (HJ) complex. HJ DNA is sandwiched between 2 RuvA tetramers; dsDNA enters through RuvA and exits via RuvB. An RuvB hexamer assembles on each DNA strand where it exits the tetramer. Each RuvB hexamer is contacted by two RuvA subunits (via domain III) on 2 adjacent RuvB subunits; this complex drives branch migration. In the full resolvosome a probable DNA-RuvA(4)-RuvB(12)-RuvC(2) complex forms which resolves the HJ.</text>
</comment>
<comment type="subcellular location">
    <subcellularLocation>
        <location evidence="1">Cytoplasm</location>
    </subcellularLocation>
</comment>
<comment type="domain">
    <text evidence="1">Has 3 domains, the large (RuvB-L) and small ATPase (RuvB-S) domains and the C-terminal head (RuvB-H) domain. The head domain binds DNA, while the ATPase domains jointly bind ATP, ADP or are empty depending on the state of the subunit in the translocation cycle. During a single DNA translocation step the structure of each domain remains the same, but their relative positions change.</text>
</comment>
<comment type="similarity">
    <text evidence="1">Belongs to the RuvB family.</text>
</comment>
<reference key="1">
    <citation type="submission" date="2007-05" db="EMBL/GenBank/DDBJ databases">
        <title>Complete sequence of chromosome of Psychrobacter sp. PRwf-1.</title>
        <authorList>
            <consortium name="US DOE Joint Genome Institute"/>
            <person name="Copeland A."/>
            <person name="Lucas S."/>
            <person name="Lapidus A."/>
            <person name="Barry K."/>
            <person name="Detter J.C."/>
            <person name="Glavina del Rio T."/>
            <person name="Hammon N."/>
            <person name="Israni S."/>
            <person name="Dalin E."/>
            <person name="Tice H."/>
            <person name="Pitluck S."/>
            <person name="Chain P."/>
            <person name="Malfatti S."/>
            <person name="Shin M."/>
            <person name="Vergez L."/>
            <person name="Schmutz J."/>
            <person name="Larimer F."/>
            <person name="Land M."/>
            <person name="Hauser L."/>
            <person name="Kyrpides N."/>
            <person name="Kim E."/>
            <person name="Tiedje J."/>
            <person name="Richardson P."/>
        </authorList>
    </citation>
    <scope>NUCLEOTIDE SEQUENCE [LARGE SCALE GENOMIC DNA]</scope>
    <source>
        <strain>PRwf-1</strain>
    </source>
</reference>
<evidence type="ECO:0000255" key="1">
    <source>
        <dbReference type="HAMAP-Rule" id="MF_00016"/>
    </source>
</evidence>
<proteinExistence type="inferred from homology"/>
<gene>
    <name evidence="1" type="primary">ruvB</name>
    <name type="ordered locus">PsycPRwf_1452</name>
</gene>
<organism>
    <name type="scientific">Psychrobacter sp. (strain PRwf-1)</name>
    <dbReference type="NCBI Taxonomy" id="349106"/>
    <lineage>
        <taxon>Bacteria</taxon>
        <taxon>Pseudomonadati</taxon>
        <taxon>Pseudomonadota</taxon>
        <taxon>Gammaproteobacteria</taxon>
        <taxon>Moraxellales</taxon>
        <taxon>Moraxellaceae</taxon>
        <taxon>Psychrobacter</taxon>
    </lineage>
</organism>
<sequence>MENRLINPVERVDDSVDNNIRPSTLAEYIGQPVVREQMEVFIEAARRRNEALDHTLIFGPPGLGKTTLANIIAREMGGNLRSTSGPVLERAGDLAAMLTNLEEGDVLFIDEIHRLSPVIEEILYPAMEDFQLDIMIGEGPAARSIKLDLPPFTLVAATTRAGLLTSPLRDRFGIVQRLEFYNIEDLTTIVSRSARLMNVVMTPEGAVEVARRSRGTPRIANRLLRRVRDYAQVKSNGEVTGEIADSALDMLAVDRRGLDHLDRRYIEMVHARFDNGPAGVEAIAAAMAEDRGTLEDVIEPYLIQQGYVLRTARGRVLTQMAIDQL</sequence>